<gene>
    <name evidence="1" type="primary">hutI</name>
    <name type="ordered locus">XC_2653</name>
</gene>
<name>HUTI_XANC8</name>
<keyword id="KW-0963">Cytoplasm</keyword>
<keyword id="KW-0369">Histidine metabolism</keyword>
<keyword id="KW-0378">Hydrolase</keyword>
<keyword id="KW-0408">Iron</keyword>
<keyword id="KW-0479">Metal-binding</keyword>
<keyword id="KW-0862">Zinc</keyword>
<evidence type="ECO:0000255" key="1">
    <source>
        <dbReference type="HAMAP-Rule" id="MF_00372"/>
    </source>
</evidence>
<evidence type="ECO:0000305" key="2"/>
<accession>Q4UTC0</accession>
<sequence>MHCDVLWHNARLMTLDAGDGGLGSVDDGVVACQDGTIVYAGPAADAPPLQASHVHDCQRRWISPGLIDCHTHLVYAGNRANEFEQRLRGASYAQIAAAGGGIVATVRATRAADDAALLAASLPRLDALLAEGVTTLEIKSGYGLTLEDEIKQLRVARQLATLRQVEVVPTFLGAHAVPPGAQGQTYIDAVCQEMIPAVAAQGLAEAVDVFCEHLAFSPAQAEQVFVAARAHGLQIKIHAEQLSNQHGAALAARYGALSADHIEYLDQAGIDAMANAGTVAVLLPGAFYFTRDTQLPPIPALRAAGVPLALATDCNPGTSPLTSPLLAMNMAATLFRMTVDGCITGFTREAARALGRGNRLGRLRAGMQCDLAIWDIDAPADLVYRMGFNPLHTRVWRGHPC</sequence>
<protein>
    <recommendedName>
        <fullName evidence="1">Imidazolonepropionase</fullName>
        <ecNumber evidence="1">3.5.2.7</ecNumber>
    </recommendedName>
    <alternativeName>
        <fullName evidence="1">Imidazolone-5-propionate hydrolase</fullName>
    </alternativeName>
</protein>
<dbReference type="EC" id="3.5.2.7" evidence="1"/>
<dbReference type="EMBL" id="CP000050">
    <property type="protein sequence ID" value="AAY49703.1"/>
    <property type="status" value="ALT_INIT"/>
    <property type="molecule type" value="Genomic_DNA"/>
</dbReference>
<dbReference type="RefSeq" id="WP_011036762.1">
    <property type="nucleotide sequence ID" value="NZ_CP155948.1"/>
</dbReference>
<dbReference type="SMR" id="Q4UTC0"/>
<dbReference type="KEGG" id="xcb:XC_2653"/>
<dbReference type="HOGENOM" id="CLU_041647_0_1_6"/>
<dbReference type="UniPathway" id="UPA00379">
    <property type="reaction ID" value="UER00551"/>
</dbReference>
<dbReference type="Proteomes" id="UP000000420">
    <property type="component" value="Chromosome"/>
</dbReference>
<dbReference type="GO" id="GO:0005737">
    <property type="term" value="C:cytoplasm"/>
    <property type="evidence" value="ECO:0007669"/>
    <property type="project" value="UniProtKB-SubCell"/>
</dbReference>
<dbReference type="GO" id="GO:0050480">
    <property type="term" value="F:imidazolonepropionase activity"/>
    <property type="evidence" value="ECO:0007669"/>
    <property type="project" value="UniProtKB-UniRule"/>
</dbReference>
<dbReference type="GO" id="GO:0005506">
    <property type="term" value="F:iron ion binding"/>
    <property type="evidence" value="ECO:0007669"/>
    <property type="project" value="UniProtKB-UniRule"/>
</dbReference>
<dbReference type="GO" id="GO:0008270">
    <property type="term" value="F:zinc ion binding"/>
    <property type="evidence" value="ECO:0007669"/>
    <property type="project" value="UniProtKB-UniRule"/>
</dbReference>
<dbReference type="GO" id="GO:0019556">
    <property type="term" value="P:L-histidine catabolic process to glutamate and formamide"/>
    <property type="evidence" value="ECO:0007669"/>
    <property type="project" value="UniProtKB-UniPathway"/>
</dbReference>
<dbReference type="GO" id="GO:0019557">
    <property type="term" value="P:L-histidine catabolic process to glutamate and formate"/>
    <property type="evidence" value="ECO:0007669"/>
    <property type="project" value="UniProtKB-UniPathway"/>
</dbReference>
<dbReference type="CDD" id="cd01296">
    <property type="entry name" value="Imidazolone-5PH"/>
    <property type="match status" value="1"/>
</dbReference>
<dbReference type="FunFam" id="3.20.20.140:FF:000007">
    <property type="entry name" value="Imidazolonepropionase"/>
    <property type="match status" value="1"/>
</dbReference>
<dbReference type="Gene3D" id="3.20.20.140">
    <property type="entry name" value="Metal-dependent hydrolases"/>
    <property type="match status" value="1"/>
</dbReference>
<dbReference type="Gene3D" id="2.30.40.10">
    <property type="entry name" value="Urease, subunit C, domain 1"/>
    <property type="match status" value="1"/>
</dbReference>
<dbReference type="HAMAP" id="MF_00372">
    <property type="entry name" value="HutI"/>
    <property type="match status" value="1"/>
</dbReference>
<dbReference type="InterPro" id="IPR006680">
    <property type="entry name" value="Amidohydro-rel"/>
</dbReference>
<dbReference type="InterPro" id="IPR005920">
    <property type="entry name" value="HutI"/>
</dbReference>
<dbReference type="InterPro" id="IPR011059">
    <property type="entry name" value="Metal-dep_hydrolase_composite"/>
</dbReference>
<dbReference type="InterPro" id="IPR032466">
    <property type="entry name" value="Metal_Hydrolase"/>
</dbReference>
<dbReference type="NCBIfam" id="TIGR01224">
    <property type="entry name" value="hutI"/>
    <property type="match status" value="1"/>
</dbReference>
<dbReference type="PANTHER" id="PTHR42752">
    <property type="entry name" value="IMIDAZOLONEPROPIONASE"/>
    <property type="match status" value="1"/>
</dbReference>
<dbReference type="PANTHER" id="PTHR42752:SF1">
    <property type="entry name" value="IMIDAZOLONEPROPIONASE-RELATED"/>
    <property type="match status" value="1"/>
</dbReference>
<dbReference type="Pfam" id="PF01979">
    <property type="entry name" value="Amidohydro_1"/>
    <property type="match status" value="1"/>
</dbReference>
<dbReference type="SUPFAM" id="SSF51338">
    <property type="entry name" value="Composite domain of metallo-dependent hydrolases"/>
    <property type="match status" value="1"/>
</dbReference>
<dbReference type="SUPFAM" id="SSF51556">
    <property type="entry name" value="Metallo-dependent hydrolases"/>
    <property type="match status" value="1"/>
</dbReference>
<organism>
    <name type="scientific">Xanthomonas campestris pv. campestris (strain 8004)</name>
    <dbReference type="NCBI Taxonomy" id="314565"/>
    <lineage>
        <taxon>Bacteria</taxon>
        <taxon>Pseudomonadati</taxon>
        <taxon>Pseudomonadota</taxon>
        <taxon>Gammaproteobacteria</taxon>
        <taxon>Lysobacterales</taxon>
        <taxon>Lysobacteraceae</taxon>
        <taxon>Xanthomonas</taxon>
    </lineage>
</organism>
<proteinExistence type="inferred from homology"/>
<reference key="1">
    <citation type="journal article" date="2005" name="Genome Res.">
        <title>Comparative and functional genomic analyses of the pathogenicity of phytopathogen Xanthomonas campestris pv. campestris.</title>
        <authorList>
            <person name="Qian W."/>
            <person name="Jia Y."/>
            <person name="Ren S.-X."/>
            <person name="He Y.-Q."/>
            <person name="Feng J.-X."/>
            <person name="Lu L.-F."/>
            <person name="Sun Q."/>
            <person name="Ying G."/>
            <person name="Tang D.-J."/>
            <person name="Tang H."/>
            <person name="Wu W."/>
            <person name="Hao P."/>
            <person name="Wang L."/>
            <person name="Jiang B.-L."/>
            <person name="Zeng S."/>
            <person name="Gu W.-Y."/>
            <person name="Lu G."/>
            <person name="Rong L."/>
            <person name="Tian Y."/>
            <person name="Yao Z."/>
            <person name="Fu G."/>
            <person name="Chen B."/>
            <person name="Fang R."/>
            <person name="Qiang B."/>
            <person name="Chen Z."/>
            <person name="Zhao G.-P."/>
            <person name="Tang J.-L."/>
            <person name="He C."/>
        </authorList>
    </citation>
    <scope>NUCLEOTIDE SEQUENCE [LARGE SCALE GENOMIC DNA]</scope>
    <source>
        <strain>8004</strain>
    </source>
</reference>
<comment type="function">
    <text evidence="1">Catalyzes the hydrolytic cleavage of the carbon-nitrogen bond in imidazolone-5-propanoate to yield N-formimidoyl-L-glutamate. It is the third step in the universal histidine degradation pathway.</text>
</comment>
<comment type="catalytic activity">
    <reaction evidence="1">
        <text>4-imidazolone-5-propanoate + H2O = N-formimidoyl-L-glutamate</text>
        <dbReference type="Rhea" id="RHEA:23660"/>
        <dbReference type="ChEBI" id="CHEBI:15377"/>
        <dbReference type="ChEBI" id="CHEBI:58928"/>
        <dbReference type="ChEBI" id="CHEBI:77893"/>
        <dbReference type="EC" id="3.5.2.7"/>
    </reaction>
</comment>
<comment type="cofactor">
    <cofactor evidence="1">
        <name>Zn(2+)</name>
        <dbReference type="ChEBI" id="CHEBI:29105"/>
    </cofactor>
    <cofactor evidence="1">
        <name>Fe(3+)</name>
        <dbReference type="ChEBI" id="CHEBI:29034"/>
    </cofactor>
    <text evidence="1">Binds 1 zinc or iron ion per subunit.</text>
</comment>
<comment type="pathway">
    <text evidence="1">Amino-acid degradation; L-histidine degradation into L-glutamate; N-formimidoyl-L-glutamate from L-histidine: step 3/3.</text>
</comment>
<comment type="subcellular location">
    <subcellularLocation>
        <location evidence="1">Cytoplasm</location>
    </subcellularLocation>
</comment>
<comment type="similarity">
    <text evidence="1">Belongs to the metallo-dependent hydrolases superfamily. HutI family.</text>
</comment>
<comment type="sequence caution" evidence="2">
    <conflict type="erroneous initiation">
        <sequence resource="EMBL-CDS" id="AAY49703"/>
    </conflict>
</comment>
<feature type="chain" id="PRO_0000306536" description="Imidazolonepropionase">
    <location>
        <begin position="1"/>
        <end position="401"/>
    </location>
</feature>
<feature type="binding site" evidence="1">
    <location>
        <position position="70"/>
    </location>
    <ligand>
        <name>Fe(3+)</name>
        <dbReference type="ChEBI" id="CHEBI:29034"/>
    </ligand>
</feature>
<feature type="binding site" evidence="1">
    <location>
        <position position="70"/>
    </location>
    <ligand>
        <name>Zn(2+)</name>
        <dbReference type="ChEBI" id="CHEBI:29105"/>
    </ligand>
</feature>
<feature type="binding site" evidence="1">
    <location>
        <position position="72"/>
    </location>
    <ligand>
        <name>Fe(3+)</name>
        <dbReference type="ChEBI" id="CHEBI:29034"/>
    </ligand>
</feature>
<feature type="binding site" evidence="1">
    <location>
        <position position="72"/>
    </location>
    <ligand>
        <name>Zn(2+)</name>
        <dbReference type="ChEBI" id="CHEBI:29105"/>
    </ligand>
</feature>
<feature type="binding site" evidence="1">
    <location>
        <position position="79"/>
    </location>
    <ligand>
        <name>4-imidazolone-5-propanoate</name>
        <dbReference type="ChEBI" id="CHEBI:77893"/>
    </ligand>
</feature>
<feature type="binding site" evidence="1">
    <location>
        <position position="142"/>
    </location>
    <ligand>
        <name>4-imidazolone-5-propanoate</name>
        <dbReference type="ChEBI" id="CHEBI:77893"/>
    </ligand>
</feature>
<feature type="binding site" evidence="1">
    <location>
        <position position="142"/>
    </location>
    <ligand>
        <name>N-formimidoyl-L-glutamate</name>
        <dbReference type="ChEBI" id="CHEBI:58928"/>
    </ligand>
</feature>
<feature type="binding site" evidence="1">
    <location>
        <position position="175"/>
    </location>
    <ligand>
        <name>4-imidazolone-5-propanoate</name>
        <dbReference type="ChEBI" id="CHEBI:77893"/>
    </ligand>
</feature>
<feature type="binding site" evidence="1">
    <location>
        <position position="238"/>
    </location>
    <ligand>
        <name>Fe(3+)</name>
        <dbReference type="ChEBI" id="CHEBI:29034"/>
    </ligand>
</feature>
<feature type="binding site" evidence="1">
    <location>
        <position position="238"/>
    </location>
    <ligand>
        <name>Zn(2+)</name>
        <dbReference type="ChEBI" id="CHEBI:29105"/>
    </ligand>
</feature>
<feature type="binding site" evidence="1">
    <location>
        <position position="241"/>
    </location>
    <ligand>
        <name>4-imidazolone-5-propanoate</name>
        <dbReference type="ChEBI" id="CHEBI:77893"/>
    </ligand>
</feature>
<feature type="binding site" evidence="1">
    <location>
        <position position="313"/>
    </location>
    <ligand>
        <name>Fe(3+)</name>
        <dbReference type="ChEBI" id="CHEBI:29034"/>
    </ligand>
</feature>
<feature type="binding site" evidence="1">
    <location>
        <position position="313"/>
    </location>
    <ligand>
        <name>Zn(2+)</name>
        <dbReference type="ChEBI" id="CHEBI:29105"/>
    </ligand>
</feature>
<feature type="binding site" evidence="1">
    <location>
        <position position="315"/>
    </location>
    <ligand>
        <name>N-formimidoyl-L-glutamate</name>
        <dbReference type="ChEBI" id="CHEBI:58928"/>
    </ligand>
</feature>
<feature type="binding site" evidence="1">
    <location>
        <position position="317"/>
    </location>
    <ligand>
        <name>N-formimidoyl-L-glutamate</name>
        <dbReference type="ChEBI" id="CHEBI:58928"/>
    </ligand>
</feature>
<feature type="binding site" evidence="1">
    <location>
        <position position="318"/>
    </location>
    <ligand>
        <name>4-imidazolone-5-propanoate</name>
        <dbReference type="ChEBI" id="CHEBI:77893"/>
    </ligand>
</feature>